<protein>
    <recommendedName>
        <fullName>Altered inheritance of mitochondria protein 24, mitochondrial</fullName>
    </recommendedName>
</protein>
<reference key="1">
    <citation type="journal article" date="2015" name="PLoS Genet.">
        <title>The dynamic genome and transcriptome of the human fungal pathogen Blastomyces and close relative Emmonsia.</title>
        <authorList>
            <person name="Munoz J.F."/>
            <person name="Gauthier G.M."/>
            <person name="Desjardins C.A."/>
            <person name="Gallo J.E."/>
            <person name="Holder J."/>
            <person name="Sullivan T.D."/>
            <person name="Marty A.J."/>
            <person name="Carmen J.C."/>
            <person name="Chen Z."/>
            <person name="Ding L."/>
            <person name="Gujja S."/>
            <person name="Magrini V."/>
            <person name="Misas E."/>
            <person name="Mitreva M."/>
            <person name="Priest M."/>
            <person name="Saif S."/>
            <person name="Whiston E.A."/>
            <person name="Young S."/>
            <person name="Zeng Q."/>
            <person name="Goldman W.E."/>
            <person name="Mardis E.R."/>
            <person name="Taylor J.W."/>
            <person name="McEwen J.G."/>
            <person name="Clay O.K."/>
            <person name="Klein B.S."/>
            <person name="Cuomo C.A."/>
        </authorList>
    </citation>
    <scope>NUCLEOTIDE SEQUENCE [LARGE SCALE GENOMIC DNA]</scope>
    <source>
        <strain>SLH14081</strain>
    </source>
</reference>
<gene>
    <name type="primary">aim24</name>
    <name type="ORF">BDBG_00316</name>
</gene>
<proteinExistence type="inferred from homology"/>
<accession>C5JD82</accession>
<accession>A0A179U6G7</accession>
<comment type="subcellular location">
    <subcellularLocation>
        <location evidence="1">Mitochondrion</location>
    </subcellularLocation>
</comment>
<comment type="similarity">
    <text evidence="4">Belongs to the AIM24 family.</text>
</comment>
<sequence length="390" mass="42915">MEAMSHSIRRSLQPFARSRRSWRSPARRAEQRWIHIQQLQSAEPGLVNGNYLPASTTANSASSPDAKFRVLGAPYSILSVTLSASQNLYTRRGTLVGLSGKADNVISTLSLLEPARRALLRIPFLYQKISSTSPITALISTRSAITTFSVVEMNGSVDWMIAQEKALLAWTGHSLRIKPRLTRQLSLSHWGNSEVTGRGLLALVGTGQLYSVELKAGEQYISHPSNVVAYTITAPSPRPYRFKSTILPFQIPSLGIGKRLSDSNFIKNLSDTDTWKAALKLWHIIRTWSRRTIWGDRLFLQFDGPATILVQSRASRMADTLTTQQVNEIADAPPGVTQDAVDRAAAKLGEEETVPKAKDDLKPTTAISGQSVASVRRDGKVEFHQTGVGQ</sequence>
<keyword id="KW-0496">Mitochondrion</keyword>
<keyword id="KW-1185">Reference proteome</keyword>
<keyword id="KW-0809">Transit peptide</keyword>
<evidence type="ECO:0000250" key="1"/>
<evidence type="ECO:0000255" key="2"/>
<evidence type="ECO:0000256" key="3">
    <source>
        <dbReference type="SAM" id="MobiDB-lite"/>
    </source>
</evidence>
<evidence type="ECO:0000305" key="4"/>
<name>AIM24_BLAGS</name>
<organism>
    <name type="scientific">Blastomyces gilchristii (strain SLH14081)</name>
    <name type="common">Blastomyces dermatitidis</name>
    <dbReference type="NCBI Taxonomy" id="559298"/>
    <lineage>
        <taxon>Eukaryota</taxon>
        <taxon>Fungi</taxon>
        <taxon>Dikarya</taxon>
        <taxon>Ascomycota</taxon>
        <taxon>Pezizomycotina</taxon>
        <taxon>Eurotiomycetes</taxon>
        <taxon>Eurotiomycetidae</taxon>
        <taxon>Onygenales</taxon>
        <taxon>Ajellomycetaceae</taxon>
        <taxon>Blastomyces</taxon>
    </lineage>
</organism>
<feature type="transit peptide" description="Mitochondrion" evidence="2">
    <location>
        <begin position="1"/>
        <end position="28"/>
    </location>
</feature>
<feature type="chain" id="PRO_0000399567" description="Altered inheritance of mitochondria protein 24, mitochondrial">
    <location>
        <begin position="29"/>
        <end position="390"/>
    </location>
</feature>
<feature type="region of interest" description="Disordered" evidence="3">
    <location>
        <begin position="348"/>
        <end position="373"/>
    </location>
</feature>
<feature type="compositionally biased region" description="Basic and acidic residues" evidence="3">
    <location>
        <begin position="348"/>
        <end position="362"/>
    </location>
</feature>
<dbReference type="EMBL" id="GG657448">
    <property type="protein sequence ID" value="OAT03615.1"/>
    <property type="molecule type" value="Genomic_DNA"/>
</dbReference>
<dbReference type="RefSeq" id="XP_002629070.1">
    <property type="nucleotide sequence ID" value="XM_002629024.1"/>
</dbReference>
<dbReference type="GeneID" id="8507927"/>
<dbReference type="KEGG" id="bgh:BDBG_00316"/>
<dbReference type="VEuPathDB" id="FungiDB:BDBG_00316"/>
<dbReference type="HOGENOM" id="CLU_046558_0_0_1"/>
<dbReference type="OrthoDB" id="5295771at2759"/>
<dbReference type="Proteomes" id="UP000002038">
    <property type="component" value="Unassembled WGS sequence"/>
</dbReference>
<dbReference type="GO" id="GO:0005743">
    <property type="term" value="C:mitochondrial inner membrane"/>
    <property type="evidence" value="ECO:0007669"/>
    <property type="project" value="TreeGrafter"/>
</dbReference>
<dbReference type="GO" id="GO:0007007">
    <property type="term" value="P:inner mitochondrial membrane organization"/>
    <property type="evidence" value="ECO:0007669"/>
    <property type="project" value="TreeGrafter"/>
</dbReference>
<dbReference type="Gene3D" id="3.60.160.10">
    <property type="entry name" value="Mitochondrial biogenesis AIM24"/>
    <property type="match status" value="1"/>
</dbReference>
<dbReference type="InterPro" id="IPR002838">
    <property type="entry name" value="AIM24"/>
</dbReference>
<dbReference type="InterPro" id="IPR036983">
    <property type="entry name" value="AIM24_sf"/>
</dbReference>
<dbReference type="InterPro" id="IPR016031">
    <property type="entry name" value="Trp_RNA-bd_attenuator-like_dom"/>
</dbReference>
<dbReference type="PANTHER" id="PTHR36959">
    <property type="entry name" value="ALTERED INHERITANCE OF MITOCHONDRIA PROTEIN 24, MITOCHONDRIAL"/>
    <property type="match status" value="1"/>
</dbReference>
<dbReference type="PANTHER" id="PTHR36959:SF2">
    <property type="entry name" value="ALTERED INHERITANCE OF MITOCHONDRIA PROTEIN 24, MITOCHONDRIAL"/>
    <property type="match status" value="1"/>
</dbReference>
<dbReference type="Pfam" id="PF01987">
    <property type="entry name" value="AIM24"/>
    <property type="match status" value="1"/>
</dbReference>
<dbReference type="SUPFAM" id="SSF51219">
    <property type="entry name" value="TRAP-like"/>
    <property type="match status" value="1"/>
</dbReference>